<evidence type="ECO:0000255" key="1">
    <source>
        <dbReference type="HAMAP-Rule" id="MF_01342"/>
    </source>
</evidence>
<evidence type="ECO:0000305" key="2"/>
<proteinExistence type="inferred from homology"/>
<geneLocation type="chloroplast"/>
<protein>
    <recommendedName>
        <fullName evidence="1">Large ribosomal subunit protein uL16c</fullName>
    </recommendedName>
    <alternativeName>
        <fullName evidence="2">50S ribosomal protein L16, chloroplastic</fullName>
    </alternativeName>
</protein>
<feature type="chain" id="PRO_0000251701" description="Large ribosomal subunit protein uL16c">
    <location>
        <begin position="1"/>
        <end position="135"/>
    </location>
</feature>
<dbReference type="EMBL" id="DQ317523">
    <property type="protein sequence ID" value="ABC25160.1"/>
    <property type="molecule type" value="Genomic_DNA"/>
</dbReference>
<dbReference type="RefSeq" id="YP_538802.1">
    <property type="nucleotide sequence ID" value="NC_007942.1"/>
</dbReference>
<dbReference type="SMR" id="Q2PMP8"/>
<dbReference type="FunCoup" id="Q2PMP8">
    <property type="interactions" value="1742"/>
</dbReference>
<dbReference type="STRING" id="3847.Q2PMP8"/>
<dbReference type="PaxDb" id="3847-GLYMA19G07400.1"/>
<dbReference type="GeneID" id="3989334"/>
<dbReference type="KEGG" id="gmx:3989334"/>
<dbReference type="eggNOG" id="KOG3422">
    <property type="taxonomic scope" value="Eukaryota"/>
</dbReference>
<dbReference type="InParanoid" id="Q2PMP8"/>
<dbReference type="Proteomes" id="UP000008827">
    <property type="component" value="Chloroplast"/>
</dbReference>
<dbReference type="GO" id="GO:0009507">
    <property type="term" value="C:chloroplast"/>
    <property type="evidence" value="ECO:0007669"/>
    <property type="project" value="UniProtKB-SubCell"/>
</dbReference>
<dbReference type="GO" id="GO:0005762">
    <property type="term" value="C:mitochondrial large ribosomal subunit"/>
    <property type="evidence" value="ECO:0000318"/>
    <property type="project" value="GO_Central"/>
</dbReference>
<dbReference type="GO" id="GO:0019843">
    <property type="term" value="F:rRNA binding"/>
    <property type="evidence" value="ECO:0000318"/>
    <property type="project" value="GO_Central"/>
</dbReference>
<dbReference type="GO" id="GO:0003735">
    <property type="term" value="F:structural constituent of ribosome"/>
    <property type="evidence" value="ECO:0000318"/>
    <property type="project" value="GO_Central"/>
</dbReference>
<dbReference type="GO" id="GO:0032543">
    <property type="term" value="P:mitochondrial translation"/>
    <property type="evidence" value="ECO:0000318"/>
    <property type="project" value="GO_Central"/>
</dbReference>
<dbReference type="CDD" id="cd01433">
    <property type="entry name" value="Ribosomal_L16_L10e"/>
    <property type="match status" value="1"/>
</dbReference>
<dbReference type="FunFam" id="3.90.1170.10:FF:000001">
    <property type="entry name" value="50S ribosomal protein L16"/>
    <property type="match status" value="1"/>
</dbReference>
<dbReference type="Gene3D" id="3.90.1170.10">
    <property type="entry name" value="Ribosomal protein L10e/L16"/>
    <property type="match status" value="1"/>
</dbReference>
<dbReference type="HAMAP" id="MF_01342">
    <property type="entry name" value="Ribosomal_uL16"/>
    <property type="match status" value="1"/>
</dbReference>
<dbReference type="InterPro" id="IPR047873">
    <property type="entry name" value="Ribosomal_uL16"/>
</dbReference>
<dbReference type="InterPro" id="IPR000114">
    <property type="entry name" value="Ribosomal_uL16_bact-type"/>
</dbReference>
<dbReference type="InterPro" id="IPR020798">
    <property type="entry name" value="Ribosomal_uL16_CS"/>
</dbReference>
<dbReference type="InterPro" id="IPR016180">
    <property type="entry name" value="Ribosomal_uL16_dom"/>
</dbReference>
<dbReference type="InterPro" id="IPR036920">
    <property type="entry name" value="Ribosomal_uL16_sf"/>
</dbReference>
<dbReference type="NCBIfam" id="TIGR01164">
    <property type="entry name" value="rplP_bact"/>
    <property type="match status" value="1"/>
</dbReference>
<dbReference type="PANTHER" id="PTHR12220">
    <property type="entry name" value="50S/60S RIBOSOMAL PROTEIN L16"/>
    <property type="match status" value="1"/>
</dbReference>
<dbReference type="PANTHER" id="PTHR12220:SF13">
    <property type="entry name" value="LARGE RIBOSOMAL SUBUNIT PROTEIN UL16M"/>
    <property type="match status" value="1"/>
</dbReference>
<dbReference type="Pfam" id="PF00252">
    <property type="entry name" value="Ribosomal_L16"/>
    <property type="match status" value="1"/>
</dbReference>
<dbReference type="PRINTS" id="PR00060">
    <property type="entry name" value="RIBOSOMALL16"/>
</dbReference>
<dbReference type="SUPFAM" id="SSF54686">
    <property type="entry name" value="Ribosomal protein L16p/L10e"/>
    <property type="match status" value="1"/>
</dbReference>
<dbReference type="PROSITE" id="PS00586">
    <property type="entry name" value="RIBOSOMAL_L16_1"/>
    <property type="match status" value="1"/>
</dbReference>
<dbReference type="PROSITE" id="PS00701">
    <property type="entry name" value="RIBOSOMAL_L16_2"/>
    <property type="match status" value="1"/>
</dbReference>
<reference key="1">
    <citation type="journal article" date="2005" name="Plant Mol. Biol.">
        <title>Complete chloroplast genome sequence of Glycine max and comparative analyses with other legume genomes.</title>
        <authorList>
            <person name="Saski C."/>
            <person name="Lee S.-B."/>
            <person name="Daniell H."/>
            <person name="Wood T.C."/>
            <person name="Tomkins J."/>
            <person name="Kim H.-G."/>
            <person name="Jansen R.K."/>
        </authorList>
    </citation>
    <scope>NUCLEOTIDE SEQUENCE [LARGE SCALE GENOMIC DNA]</scope>
    <source>
        <strain>cv. PI 437654</strain>
    </source>
</reference>
<gene>
    <name evidence="1" type="primary">rpl16</name>
</gene>
<name>RK16_SOYBN</name>
<sequence length="135" mass="15327">MLSPQRTRFRKQHRGRMKGISYRGNHICFGRYALQALEPAWITSRQIEAGRRAMSRNVRRGGQIWVRIFPDKPVTVRPTETRMGSGKGSPEYWVAVVKPGKILYEMGGVPENIARKAISIASSKMPIRTQFIISG</sequence>
<keyword id="KW-0150">Chloroplast</keyword>
<keyword id="KW-0934">Plastid</keyword>
<keyword id="KW-1185">Reference proteome</keyword>
<keyword id="KW-0687">Ribonucleoprotein</keyword>
<keyword id="KW-0689">Ribosomal protein</keyword>
<accession>Q2PMP8</accession>
<organism>
    <name type="scientific">Glycine max</name>
    <name type="common">Soybean</name>
    <name type="synonym">Glycine hispida</name>
    <dbReference type="NCBI Taxonomy" id="3847"/>
    <lineage>
        <taxon>Eukaryota</taxon>
        <taxon>Viridiplantae</taxon>
        <taxon>Streptophyta</taxon>
        <taxon>Embryophyta</taxon>
        <taxon>Tracheophyta</taxon>
        <taxon>Spermatophyta</taxon>
        <taxon>Magnoliopsida</taxon>
        <taxon>eudicotyledons</taxon>
        <taxon>Gunneridae</taxon>
        <taxon>Pentapetalae</taxon>
        <taxon>rosids</taxon>
        <taxon>fabids</taxon>
        <taxon>Fabales</taxon>
        <taxon>Fabaceae</taxon>
        <taxon>Papilionoideae</taxon>
        <taxon>50 kb inversion clade</taxon>
        <taxon>NPAAA clade</taxon>
        <taxon>indigoferoid/millettioid clade</taxon>
        <taxon>Phaseoleae</taxon>
        <taxon>Glycine</taxon>
        <taxon>Glycine subgen. Soja</taxon>
    </lineage>
</organism>
<comment type="subunit">
    <text evidence="1">Part of the 50S ribosomal subunit.</text>
</comment>
<comment type="subcellular location">
    <subcellularLocation>
        <location>Plastid</location>
        <location>Chloroplast</location>
    </subcellularLocation>
</comment>
<comment type="similarity">
    <text evidence="1">Belongs to the universal ribosomal protein uL16 family.</text>
</comment>